<reference key="1">
    <citation type="journal article" date="2001" name="Proc. Natl. Acad. Sci. U.S.A.">
        <title>Complete genome sequence of Caulobacter crescentus.</title>
        <authorList>
            <person name="Nierman W.C."/>
            <person name="Feldblyum T.V."/>
            <person name="Laub M.T."/>
            <person name="Paulsen I.T."/>
            <person name="Nelson K.E."/>
            <person name="Eisen J.A."/>
            <person name="Heidelberg J.F."/>
            <person name="Alley M.R.K."/>
            <person name="Ohta N."/>
            <person name="Maddock J.R."/>
            <person name="Potocka I."/>
            <person name="Nelson W.C."/>
            <person name="Newton A."/>
            <person name="Stephens C."/>
            <person name="Phadke N.D."/>
            <person name="Ely B."/>
            <person name="DeBoy R.T."/>
            <person name="Dodson R.J."/>
            <person name="Durkin A.S."/>
            <person name="Gwinn M.L."/>
            <person name="Haft D.H."/>
            <person name="Kolonay J.F."/>
            <person name="Smit J."/>
            <person name="Craven M.B."/>
            <person name="Khouri H.M."/>
            <person name="Shetty J."/>
            <person name="Berry K.J."/>
            <person name="Utterback T.R."/>
            <person name="Tran K."/>
            <person name="Wolf A.M."/>
            <person name="Vamathevan J.J."/>
            <person name="Ermolaeva M.D."/>
            <person name="White O."/>
            <person name="Salzberg S.L."/>
            <person name="Venter J.C."/>
            <person name="Shapiro L."/>
            <person name="Fraser C.M."/>
        </authorList>
    </citation>
    <scope>NUCLEOTIDE SEQUENCE [LARGE SCALE GENOMIC DNA]</scope>
    <source>
        <strain>ATCC 19089 / CIP 103742 / CB 15</strain>
    </source>
</reference>
<comment type="function">
    <text evidence="1">Could be a nuclease involved in processing of the 5'-end of pre-16S rRNA.</text>
</comment>
<comment type="subcellular location">
    <subcellularLocation>
        <location evidence="1">Cytoplasm</location>
    </subcellularLocation>
</comment>
<comment type="similarity">
    <text evidence="1">Belongs to the YqgF nuclease family.</text>
</comment>
<proteinExistence type="inferred from homology"/>
<evidence type="ECO:0000255" key="1">
    <source>
        <dbReference type="HAMAP-Rule" id="MF_00651"/>
    </source>
</evidence>
<keyword id="KW-0963">Cytoplasm</keyword>
<keyword id="KW-0378">Hydrolase</keyword>
<keyword id="KW-0540">Nuclease</keyword>
<keyword id="KW-1185">Reference proteome</keyword>
<keyword id="KW-0690">Ribosome biogenesis</keyword>
<feature type="chain" id="PRO_0000172042" description="Putative pre-16S rRNA nuclease">
    <location>
        <begin position="1"/>
        <end position="156"/>
    </location>
</feature>
<sequence>MPVLDIEDFADALPQYAAVVGLDPGEKTIGVAVSDVTRTVASPLALIEKTKFSKDAEQLFKLMDSRGAVAIVIGLPMNMDGTEGVRCQSNRALGRNLLRLKPDLPITFWDERLSTAAVTRVLIDEHDISRKRRDEVVDKMAAGWILQGALERLRGL</sequence>
<organism>
    <name type="scientific">Caulobacter vibrioides (strain ATCC 19089 / CIP 103742 / CB 15)</name>
    <name type="common">Caulobacter crescentus</name>
    <dbReference type="NCBI Taxonomy" id="190650"/>
    <lineage>
        <taxon>Bacteria</taxon>
        <taxon>Pseudomonadati</taxon>
        <taxon>Pseudomonadota</taxon>
        <taxon>Alphaproteobacteria</taxon>
        <taxon>Caulobacterales</taxon>
        <taxon>Caulobacteraceae</taxon>
        <taxon>Caulobacter</taxon>
    </lineage>
</organism>
<gene>
    <name type="ordered locus">CC_2439</name>
</gene>
<accession>Q9A5K8</accession>
<protein>
    <recommendedName>
        <fullName evidence="1">Putative pre-16S rRNA nuclease</fullName>
        <ecNumber evidence="1">3.1.-.-</ecNumber>
    </recommendedName>
</protein>
<dbReference type="EC" id="3.1.-.-" evidence="1"/>
<dbReference type="EMBL" id="AE005673">
    <property type="protein sequence ID" value="AAK24410.1"/>
    <property type="molecule type" value="Genomic_DNA"/>
</dbReference>
<dbReference type="PIR" id="F87551">
    <property type="entry name" value="F87551"/>
</dbReference>
<dbReference type="RefSeq" id="NP_421242.1">
    <property type="nucleotide sequence ID" value="NC_002696.2"/>
</dbReference>
<dbReference type="RefSeq" id="WP_010920297.1">
    <property type="nucleotide sequence ID" value="NC_002696.2"/>
</dbReference>
<dbReference type="SMR" id="Q9A5K8"/>
<dbReference type="STRING" id="190650.CC_2439"/>
<dbReference type="EnsemblBacteria" id="AAK24410">
    <property type="protein sequence ID" value="AAK24410"/>
    <property type="gene ID" value="CC_2439"/>
</dbReference>
<dbReference type="KEGG" id="ccr:CC_2439"/>
<dbReference type="PATRIC" id="fig|190650.5.peg.2456"/>
<dbReference type="eggNOG" id="COG0816">
    <property type="taxonomic scope" value="Bacteria"/>
</dbReference>
<dbReference type="HOGENOM" id="CLU_098240_1_1_5"/>
<dbReference type="BioCyc" id="CAULO:CC2439-MONOMER"/>
<dbReference type="Proteomes" id="UP000001816">
    <property type="component" value="Chromosome"/>
</dbReference>
<dbReference type="GO" id="GO:0005829">
    <property type="term" value="C:cytosol"/>
    <property type="evidence" value="ECO:0007669"/>
    <property type="project" value="TreeGrafter"/>
</dbReference>
<dbReference type="GO" id="GO:0004518">
    <property type="term" value="F:nuclease activity"/>
    <property type="evidence" value="ECO:0007669"/>
    <property type="project" value="UniProtKB-KW"/>
</dbReference>
<dbReference type="GO" id="GO:0000967">
    <property type="term" value="P:rRNA 5'-end processing"/>
    <property type="evidence" value="ECO:0007669"/>
    <property type="project" value="UniProtKB-UniRule"/>
</dbReference>
<dbReference type="CDD" id="cd16964">
    <property type="entry name" value="YqgF"/>
    <property type="match status" value="1"/>
</dbReference>
<dbReference type="Gene3D" id="3.30.420.140">
    <property type="entry name" value="YqgF/RNase H-like domain"/>
    <property type="match status" value="1"/>
</dbReference>
<dbReference type="HAMAP" id="MF_00651">
    <property type="entry name" value="Nuclease_YqgF"/>
    <property type="match status" value="1"/>
</dbReference>
<dbReference type="InterPro" id="IPR012337">
    <property type="entry name" value="RNaseH-like_sf"/>
</dbReference>
<dbReference type="InterPro" id="IPR005227">
    <property type="entry name" value="YqgF"/>
</dbReference>
<dbReference type="InterPro" id="IPR006641">
    <property type="entry name" value="YqgF/RNaseH-like_dom"/>
</dbReference>
<dbReference type="InterPro" id="IPR037027">
    <property type="entry name" value="YqgF/RNaseH-like_dom_sf"/>
</dbReference>
<dbReference type="NCBIfam" id="TIGR00250">
    <property type="entry name" value="RNAse_H_YqgF"/>
    <property type="match status" value="1"/>
</dbReference>
<dbReference type="PANTHER" id="PTHR33317">
    <property type="entry name" value="POLYNUCLEOTIDYL TRANSFERASE, RIBONUCLEASE H-LIKE SUPERFAMILY PROTEIN"/>
    <property type="match status" value="1"/>
</dbReference>
<dbReference type="PANTHER" id="PTHR33317:SF4">
    <property type="entry name" value="POLYNUCLEOTIDYL TRANSFERASE, RIBONUCLEASE H-LIKE SUPERFAMILY PROTEIN"/>
    <property type="match status" value="1"/>
</dbReference>
<dbReference type="Pfam" id="PF03652">
    <property type="entry name" value="RuvX"/>
    <property type="match status" value="1"/>
</dbReference>
<dbReference type="SMART" id="SM00732">
    <property type="entry name" value="YqgFc"/>
    <property type="match status" value="1"/>
</dbReference>
<dbReference type="SUPFAM" id="SSF53098">
    <property type="entry name" value="Ribonuclease H-like"/>
    <property type="match status" value="1"/>
</dbReference>
<name>YQGF_CAUVC</name>